<gene>
    <name evidence="1" type="primary">pyrC</name>
    <name type="ordered locus">NT01EI_2383</name>
</gene>
<dbReference type="EC" id="3.5.2.3" evidence="1"/>
<dbReference type="EMBL" id="CP001600">
    <property type="protein sequence ID" value="ACR69553.1"/>
    <property type="molecule type" value="Genomic_DNA"/>
</dbReference>
<dbReference type="RefSeq" id="WP_015871669.1">
    <property type="nucleotide sequence ID" value="NZ_CP169062.1"/>
</dbReference>
<dbReference type="SMR" id="C5BA73"/>
<dbReference type="STRING" id="67780.B6E78_04120"/>
<dbReference type="GeneID" id="69539314"/>
<dbReference type="KEGG" id="eic:NT01EI_2383"/>
<dbReference type="PATRIC" id="fig|634503.3.peg.2112"/>
<dbReference type="HOGENOM" id="CLU_041558_1_0_6"/>
<dbReference type="OrthoDB" id="9808095at2"/>
<dbReference type="UniPathway" id="UPA00070">
    <property type="reaction ID" value="UER00117"/>
</dbReference>
<dbReference type="Proteomes" id="UP000001485">
    <property type="component" value="Chromosome"/>
</dbReference>
<dbReference type="GO" id="GO:0005829">
    <property type="term" value="C:cytosol"/>
    <property type="evidence" value="ECO:0007669"/>
    <property type="project" value="TreeGrafter"/>
</dbReference>
<dbReference type="GO" id="GO:0004151">
    <property type="term" value="F:dihydroorotase activity"/>
    <property type="evidence" value="ECO:0007669"/>
    <property type="project" value="UniProtKB-UniRule"/>
</dbReference>
<dbReference type="GO" id="GO:0008270">
    <property type="term" value="F:zinc ion binding"/>
    <property type="evidence" value="ECO:0007669"/>
    <property type="project" value="UniProtKB-UniRule"/>
</dbReference>
<dbReference type="GO" id="GO:0006207">
    <property type="term" value="P:'de novo' pyrimidine nucleobase biosynthetic process"/>
    <property type="evidence" value="ECO:0007669"/>
    <property type="project" value="TreeGrafter"/>
</dbReference>
<dbReference type="GO" id="GO:0044205">
    <property type="term" value="P:'de novo' UMP biosynthetic process"/>
    <property type="evidence" value="ECO:0007669"/>
    <property type="project" value="UniProtKB-UniRule"/>
</dbReference>
<dbReference type="CDD" id="cd01294">
    <property type="entry name" value="DHOase"/>
    <property type="match status" value="1"/>
</dbReference>
<dbReference type="FunFam" id="3.20.20.140:FF:000006">
    <property type="entry name" value="Dihydroorotase"/>
    <property type="match status" value="1"/>
</dbReference>
<dbReference type="Gene3D" id="3.20.20.140">
    <property type="entry name" value="Metal-dependent hydrolases"/>
    <property type="match status" value="1"/>
</dbReference>
<dbReference type="HAMAP" id="MF_00219">
    <property type="entry name" value="PyrC_classII"/>
    <property type="match status" value="1"/>
</dbReference>
<dbReference type="InterPro" id="IPR006680">
    <property type="entry name" value="Amidohydro-rel"/>
</dbReference>
<dbReference type="InterPro" id="IPR004721">
    <property type="entry name" value="DHOdimr"/>
</dbReference>
<dbReference type="InterPro" id="IPR002195">
    <property type="entry name" value="Dihydroorotase_CS"/>
</dbReference>
<dbReference type="InterPro" id="IPR032466">
    <property type="entry name" value="Metal_Hydrolase"/>
</dbReference>
<dbReference type="NCBIfam" id="TIGR00856">
    <property type="entry name" value="pyrC_dimer"/>
    <property type="match status" value="1"/>
</dbReference>
<dbReference type="PANTHER" id="PTHR43137">
    <property type="entry name" value="DIHYDROOROTASE"/>
    <property type="match status" value="1"/>
</dbReference>
<dbReference type="PANTHER" id="PTHR43137:SF1">
    <property type="entry name" value="DIHYDROOROTASE"/>
    <property type="match status" value="1"/>
</dbReference>
<dbReference type="Pfam" id="PF01979">
    <property type="entry name" value="Amidohydro_1"/>
    <property type="match status" value="1"/>
</dbReference>
<dbReference type="PIRSF" id="PIRSF001237">
    <property type="entry name" value="DHOdimr"/>
    <property type="match status" value="1"/>
</dbReference>
<dbReference type="SUPFAM" id="SSF51556">
    <property type="entry name" value="Metallo-dependent hydrolases"/>
    <property type="match status" value="1"/>
</dbReference>
<dbReference type="PROSITE" id="PS00483">
    <property type="entry name" value="DIHYDROOROTASE_2"/>
    <property type="match status" value="1"/>
</dbReference>
<accession>C5BA73</accession>
<organism>
    <name type="scientific">Edwardsiella ictaluri (strain 93-146)</name>
    <dbReference type="NCBI Taxonomy" id="634503"/>
    <lineage>
        <taxon>Bacteria</taxon>
        <taxon>Pseudomonadati</taxon>
        <taxon>Pseudomonadota</taxon>
        <taxon>Gammaproteobacteria</taxon>
        <taxon>Enterobacterales</taxon>
        <taxon>Hafniaceae</taxon>
        <taxon>Edwardsiella</taxon>
    </lineage>
</organism>
<protein>
    <recommendedName>
        <fullName evidence="1">Dihydroorotase</fullName>
        <shortName evidence="1">DHOase</shortName>
        <ecNumber evidence="1">3.5.2.3</ecNumber>
    </recommendedName>
</protein>
<reference key="1">
    <citation type="submission" date="2009-03" db="EMBL/GenBank/DDBJ databases">
        <title>Complete genome sequence of Edwardsiella ictaluri 93-146.</title>
        <authorList>
            <person name="Williams M.L."/>
            <person name="Gillaspy A.F."/>
            <person name="Dyer D.W."/>
            <person name="Thune R.L."/>
            <person name="Waldbieser G.C."/>
            <person name="Schuster S.C."/>
            <person name="Gipson J."/>
            <person name="Zaitshik J."/>
            <person name="Landry C."/>
            <person name="Lawrence M.L."/>
        </authorList>
    </citation>
    <scope>NUCLEOTIDE SEQUENCE [LARGE SCALE GENOMIC DNA]</scope>
    <source>
        <strain>93-146</strain>
    </source>
</reference>
<comment type="function">
    <text evidence="1">Catalyzes the reversible cyclization of carbamoyl aspartate to dihydroorotate.</text>
</comment>
<comment type="catalytic activity">
    <reaction evidence="1">
        <text>(S)-dihydroorotate + H2O = N-carbamoyl-L-aspartate + H(+)</text>
        <dbReference type="Rhea" id="RHEA:24296"/>
        <dbReference type="ChEBI" id="CHEBI:15377"/>
        <dbReference type="ChEBI" id="CHEBI:15378"/>
        <dbReference type="ChEBI" id="CHEBI:30864"/>
        <dbReference type="ChEBI" id="CHEBI:32814"/>
        <dbReference type="EC" id="3.5.2.3"/>
    </reaction>
</comment>
<comment type="cofactor">
    <cofactor evidence="1">
        <name>Zn(2+)</name>
        <dbReference type="ChEBI" id="CHEBI:29105"/>
    </cofactor>
    <text evidence="1">Binds 2 Zn(2+) ions per subunit.</text>
</comment>
<comment type="pathway">
    <text evidence="1">Pyrimidine metabolism; UMP biosynthesis via de novo pathway; (S)-dihydroorotate from bicarbonate: step 3/3.</text>
</comment>
<comment type="subunit">
    <text evidence="1">Homodimer.</text>
</comment>
<comment type="similarity">
    <text evidence="1">Belongs to the metallo-dependent hydrolases superfamily. DHOase family. Class II DHOase subfamily.</text>
</comment>
<proteinExistence type="inferred from homology"/>
<keyword id="KW-0378">Hydrolase</keyword>
<keyword id="KW-0479">Metal-binding</keyword>
<keyword id="KW-0665">Pyrimidine biosynthesis</keyword>
<keyword id="KW-0862">Zinc</keyword>
<evidence type="ECO:0000255" key="1">
    <source>
        <dbReference type="HAMAP-Rule" id="MF_00219"/>
    </source>
</evidence>
<name>PYRC_EDWI9</name>
<sequence length="348" mass="38671">MTVMQHTLKIRRPDDWHLHLRDDAMLHSVLPYTSRHFSRAVVMPNLVPPITSVEQCIAYRQRILDAVPQGHAFTPLMTCYLTDALSVDTLMHGQREGVFTAAKLYPANATTNSACGVTSIPGLYPLFEAMQQSGMPLLIHGEVTQADIDIFDREARFIEQVMLPLRRDFPELRIVFEHITTREAAQFVAEGDRYLAATITPQHLMFNRNHMLVGGIHPHLYCLPILKRSVHQQALRKAATSGQTCFFLGTDSAPHLRGRKESACGCAGVFNAPTALQAYATVFEEEQALQHLEAFCSLNGPAFYGLPANEAYIELAQEPASVVDSIASGDETLTPFLAGETLRWSVRA</sequence>
<feature type="chain" id="PRO_1000204246" description="Dihydroorotase">
    <location>
        <begin position="1"/>
        <end position="348"/>
    </location>
</feature>
<feature type="active site" evidence="1">
    <location>
        <position position="251"/>
    </location>
</feature>
<feature type="binding site" evidence="1">
    <location>
        <position position="17"/>
    </location>
    <ligand>
        <name>Zn(2+)</name>
        <dbReference type="ChEBI" id="CHEBI:29105"/>
        <label>1</label>
    </ligand>
</feature>
<feature type="binding site" evidence="1">
    <location>
        <begin position="19"/>
        <end position="21"/>
    </location>
    <ligand>
        <name>substrate</name>
    </ligand>
</feature>
<feature type="binding site" evidence="1">
    <location>
        <position position="19"/>
    </location>
    <ligand>
        <name>Zn(2+)</name>
        <dbReference type="ChEBI" id="CHEBI:29105"/>
        <label>1</label>
    </ligand>
</feature>
<feature type="binding site" evidence="1">
    <location>
        <position position="45"/>
    </location>
    <ligand>
        <name>substrate</name>
    </ligand>
</feature>
<feature type="binding site" description="via carbamate group" evidence="1">
    <location>
        <position position="103"/>
    </location>
    <ligand>
        <name>Zn(2+)</name>
        <dbReference type="ChEBI" id="CHEBI:29105"/>
        <label>1</label>
    </ligand>
</feature>
<feature type="binding site" description="via carbamate group" evidence="1">
    <location>
        <position position="103"/>
    </location>
    <ligand>
        <name>Zn(2+)</name>
        <dbReference type="ChEBI" id="CHEBI:29105"/>
        <label>2</label>
    </ligand>
</feature>
<feature type="binding site" evidence="1">
    <location>
        <position position="140"/>
    </location>
    <ligand>
        <name>substrate</name>
    </ligand>
</feature>
<feature type="binding site" evidence="1">
    <location>
        <position position="140"/>
    </location>
    <ligand>
        <name>Zn(2+)</name>
        <dbReference type="ChEBI" id="CHEBI:29105"/>
        <label>2</label>
    </ligand>
</feature>
<feature type="binding site" evidence="1">
    <location>
        <position position="178"/>
    </location>
    <ligand>
        <name>Zn(2+)</name>
        <dbReference type="ChEBI" id="CHEBI:29105"/>
        <label>2</label>
    </ligand>
</feature>
<feature type="binding site" evidence="1">
    <location>
        <position position="223"/>
    </location>
    <ligand>
        <name>substrate</name>
    </ligand>
</feature>
<feature type="binding site" evidence="1">
    <location>
        <position position="251"/>
    </location>
    <ligand>
        <name>Zn(2+)</name>
        <dbReference type="ChEBI" id="CHEBI:29105"/>
        <label>1</label>
    </ligand>
</feature>
<feature type="binding site" evidence="1">
    <location>
        <position position="255"/>
    </location>
    <ligand>
        <name>substrate</name>
    </ligand>
</feature>
<feature type="binding site" evidence="1">
    <location>
        <position position="267"/>
    </location>
    <ligand>
        <name>substrate</name>
    </ligand>
</feature>
<feature type="modified residue" description="N6-carboxylysine" evidence="1">
    <location>
        <position position="103"/>
    </location>
</feature>